<protein>
    <recommendedName>
        <fullName evidence="1">Nucleotide-binding protein PSEEN4469</fullName>
    </recommendedName>
</protein>
<comment type="function">
    <text evidence="1">Nucleotide-binding protein.</text>
</comment>
<comment type="similarity">
    <text evidence="1">Belongs to the YajQ family.</text>
</comment>
<proteinExistence type="inferred from homology"/>
<feature type="chain" id="PRO_1000051750" description="Nucleotide-binding protein PSEEN4469">
    <location>
        <begin position="1"/>
        <end position="161"/>
    </location>
</feature>
<sequence length="161" mass="18529">MPSFDVVSELDKHEVQNAVDNAIKDLDRRYDLKGKGTFEFKDKEQTVLLTAEEEFQLEAMLEILRLALVKRKIDVKCLETKDPYASGKEKKQEAKFREGIDKDLAKKIVATIKDGKLKVQAAIQGEQVRVTGKKRDDLQEAIALLRTKEFDMPLQFNNFRD</sequence>
<dbReference type="EMBL" id="CT573326">
    <property type="protein sequence ID" value="CAK17152.1"/>
    <property type="molecule type" value="Genomic_DNA"/>
</dbReference>
<dbReference type="RefSeq" id="WP_011535522.1">
    <property type="nucleotide sequence ID" value="NC_008027.1"/>
</dbReference>
<dbReference type="SMR" id="Q1I5D3"/>
<dbReference type="STRING" id="384676.PSEEN4469"/>
<dbReference type="KEGG" id="pen:PSEEN4469"/>
<dbReference type="eggNOG" id="COG1666">
    <property type="taxonomic scope" value="Bacteria"/>
</dbReference>
<dbReference type="HOGENOM" id="CLU_099839_1_0_6"/>
<dbReference type="OrthoDB" id="9801447at2"/>
<dbReference type="Proteomes" id="UP000000658">
    <property type="component" value="Chromosome"/>
</dbReference>
<dbReference type="GO" id="GO:0005829">
    <property type="term" value="C:cytosol"/>
    <property type="evidence" value="ECO:0007669"/>
    <property type="project" value="TreeGrafter"/>
</dbReference>
<dbReference type="GO" id="GO:0000166">
    <property type="term" value="F:nucleotide binding"/>
    <property type="evidence" value="ECO:0007669"/>
    <property type="project" value="TreeGrafter"/>
</dbReference>
<dbReference type="CDD" id="cd11740">
    <property type="entry name" value="YajQ_like"/>
    <property type="match status" value="1"/>
</dbReference>
<dbReference type="FunFam" id="3.30.70.860:FF:000001">
    <property type="entry name" value="UPF0234 protein YajQ"/>
    <property type="match status" value="1"/>
</dbReference>
<dbReference type="Gene3D" id="3.30.70.860">
    <property type="match status" value="1"/>
</dbReference>
<dbReference type="Gene3D" id="3.30.70.990">
    <property type="entry name" value="YajQ-like, domain 2"/>
    <property type="match status" value="1"/>
</dbReference>
<dbReference type="HAMAP" id="MF_00632">
    <property type="entry name" value="YajQ"/>
    <property type="match status" value="1"/>
</dbReference>
<dbReference type="InterPro" id="IPR007551">
    <property type="entry name" value="DUF520"/>
</dbReference>
<dbReference type="InterPro" id="IPR035571">
    <property type="entry name" value="UPF0234-like_C"/>
</dbReference>
<dbReference type="InterPro" id="IPR035570">
    <property type="entry name" value="UPF0234_N"/>
</dbReference>
<dbReference type="InterPro" id="IPR036183">
    <property type="entry name" value="YajQ-like_sf"/>
</dbReference>
<dbReference type="NCBIfam" id="NF003819">
    <property type="entry name" value="PRK05412.1"/>
    <property type="match status" value="1"/>
</dbReference>
<dbReference type="PANTHER" id="PTHR30476">
    <property type="entry name" value="UPF0234 PROTEIN YAJQ"/>
    <property type="match status" value="1"/>
</dbReference>
<dbReference type="PANTHER" id="PTHR30476:SF0">
    <property type="entry name" value="UPF0234 PROTEIN YAJQ"/>
    <property type="match status" value="1"/>
</dbReference>
<dbReference type="Pfam" id="PF04461">
    <property type="entry name" value="DUF520"/>
    <property type="match status" value="1"/>
</dbReference>
<dbReference type="SUPFAM" id="SSF89963">
    <property type="entry name" value="YajQ-like"/>
    <property type="match status" value="2"/>
</dbReference>
<accession>Q1I5D3</accession>
<reference key="1">
    <citation type="journal article" date="2006" name="Nat. Biotechnol.">
        <title>Complete genome sequence of the entomopathogenic and metabolically versatile soil bacterium Pseudomonas entomophila.</title>
        <authorList>
            <person name="Vodovar N."/>
            <person name="Vallenet D."/>
            <person name="Cruveiller S."/>
            <person name="Rouy Z."/>
            <person name="Barbe V."/>
            <person name="Acosta C."/>
            <person name="Cattolico L."/>
            <person name="Jubin C."/>
            <person name="Lajus A."/>
            <person name="Segurens B."/>
            <person name="Vacherie B."/>
            <person name="Wincker P."/>
            <person name="Weissenbach J."/>
            <person name="Lemaitre B."/>
            <person name="Medigue C."/>
            <person name="Boccard F."/>
        </authorList>
    </citation>
    <scope>NUCLEOTIDE SEQUENCE [LARGE SCALE GENOMIC DNA]</scope>
    <source>
        <strain>L48</strain>
    </source>
</reference>
<organism>
    <name type="scientific">Pseudomonas entomophila (strain L48)</name>
    <dbReference type="NCBI Taxonomy" id="384676"/>
    <lineage>
        <taxon>Bacteria</taxon>
        <taxon>Pseudomonadati</taxon>
        <taxon>Pseudomonadota</taxon>
        <taxon>Gammaproteobacteria</taxon>
        <taxon>Pseudomonadales</taxon>
        <taxon>Pseudomonadaceae</taxon>
        <taxon>Pseudomonas</taxon>
    </lineage>
</organism>
<name>Y4469_PSEE4</name>
<gene>
    <name type="ordered locus">PSEEN4469</name>
</gene>
<evidence type="ECO:0000255" key="1">
    <source>
        <dbReference type="HAMAP-Rule" id="MF_00632"/>
    </source>
</evidence>
<keyword id="KW-0547">Nucleotide-binding</keyword>